<organism>
    <name type="scientific">Bordetella avium (strain 197N)</name>
    <dbReference type="NCBI Taxonomy" id="360910"/>
    <lineage>
        <taxon>Bacteria</taxon>
        <taxon>Pseudomonadati</taxon>
        <taxon>Pseudomonadota</taxon>
        <taxon>Betaproteobacteria</taxon>
        <taxon>Burkholderiales</taxon>
        <taxon>Alcaligenaceae</taxon>
        <taxon>Bordetella</taxon>
    </lineage>
</organism>
<accession>Q2KUZ9</accession>
<dbReference type="EC" id="7.1.1.-" evidence="1"/>
<dbReference type="EMBL" id="AM167904">
    <property type="protein sequence ID" value="CAJ48658.1"/>
    <property type="molecule type" value="Genomic_DNA"/>
</dbReference>
<dbReference type="RefSeq" id="WP_012416733.1">
    <property type="nucleotide sequence ID" value="NC_010645.1"/>
</dbReference>
<dbReference type="SMR" id="Q2KUZ9"/>
<dbReference type="STRING" id="360910.BAV1049"/>
<dbReference type="GeneID" id="92935757"/>
<dbReference type="KEGG" id="bav:BAV1049"/>
<dbReference type="eggNOG" id="COG1005">
    <property type="taxonomic scope" value="Bacteria"/>
</dbReference>
<dbReference type="HOGENOM" id="CLU_015134_0_1_4"/>
<dbReference type="OrthoDB" id="9803734at2"/>
<dbReference type="Proteomes" id="UP000001977">
    <property type="component" value="Chromosome"/>
</dbReference>
<dbReference type="GO" id="GO:0005886">
    <property type="term" value="C:plasma membrane"/>
    <property type="evidence" value="ECO:0007669"/>
    <property type="project" value="UniProtKB-SubCell"/>
</dbReference>
<dbReference type="GO" id="GO:0003954">
    <property type="term" value="F:NADH dehydrogenase activity"/>
    <property type="evidence" value="ECO:0007669"/>
    <property type="project" value="TreeGrafter"/>
</dbReference>
<dbReference type="GO" id="GO:0016655">
    <property type="term" value="F:oxidoreductase activity, acting on NAD(P)H, quinone or similar compound as acceptor"/>
    <property type="evidence" value="ECO:0007669"/>
    <property type="project" value="UniProtKB-UniRule"/>
</dbReference>
<dbReference type="GO" id="GO:0048038">
    <property type="term" value="F:quinone binding"/>
    <property type="evidence" value="ECO:0007669"/>
    <property type="project" value="UniProtKB-KW"/>
</dbReference>
<dbReference type="GO" id="GO:0009060">
    <property type="term" value="P:aerobic respiration"/>
    <property type="evidence" value="ECO:0007669"/>
    <property type="project" value="TreeGrafter"/>
</dbReference>
<dbReference type="HAMAP" id="MF_01350">
    <property type="entry name" value="NDH1_NuoH"/>
    <property type="match status" value="1"/>
</dbReference>
<dbReference type="InterPro" id="IPR001694">
    <property type="entry name" value="NADH_UbQ_OxRdtase_su1/FPO"/>
</dbReference>
<dbReference type="InterPro" id="IPR018086">
    <property type="entry name" value="NADH_UbQ_OxRdtase_su1_CS"/>
</dbReference>
<dbReference type="NCBIfam" id="NF004741">
    <property type="entry name" value="PRK06076.1-2"/>
    <property type="match status" value="1"/>
</dbReference>
<dbReference type="NCBIfam" id="NF004742">
    <property type="entry name" value="PRK06076.1-3"/>
    <property type="match status" value="1"/>
</dbReference>
<dbReference type="PANTHER" id="PTHR11432">
    <property type="entry name" value="NADH DEHYDROGENASE SUBUNIT 1"/>
    <property type="match status" value="1"/>
</dbReference>
<dbReference type="PANTHER" id="PTHR11432:SF3">
    <property type="entry name" value="NADH-UBIQUINONE OXIDOREDUCTASE CHAIN 1"/>
    <property type="match status" value="1"/>
</dbReference>
<dbReference type="Pfam" id="PF00146">
    <property type="entry name" value="NADHdh"/>
    <property type="match status" value="1"/>
</dbReference>
<dbReference type="PROSITE" id="PS00668">
    <property type="entry name" value="COMPLEX1_ND1_2"/>
    <property type="match status" value="1"/>
</dbReference>
<protein>
    <recommendedName>
        <fullName evidence="1">NADH-quinone oxidoreductase subunit H</fullName>
        <ecNumber evidence="1">7.1.1.-</ecNumber>
    </recommendedName>
    <alternativeName>
        <fullName evidence="1">NADH dehydrogenase I subunit H</fullName>
    </alternativeName>
    <alternativeName>
        <fullName evidence="1">NDH-1 subunit H</fullName>
    </alternativeName>
</protein>
<gene>
    <name evidence="1" type="primary">nuoH</name>
    <name type="ordered locus">BAV1049</name>
</gene>
<keyword id="KW-0997">Cell inner membrane</keyword>
<keyword id="KW-1003">Cell membrane</keyword>
<keyword id="KW-0472">Membrane</keyword>
<keyword id="KW-0520">NAD</keyword>
<keyword id="KW-0874">Quinone</keyword>
<keyword id="KW-1185">Reference proteome</keyword>
<keyword id="KW-1278">Translocase</keyword>
<keyword id="KW-0812">Transmembrane</keyword>
<keyword id="KW-1133">Transmembrane helix</keyword>
<keyword id="KW-0830">Ubiquinone</keyword>
<name>NUOH_BORA1</name>
<feature type="chain" id="PRO_0000240060" description="NADH-quinone oxidoreductase subunit H">
    <location>
        <begin position="1"/>
        <end position="357"/>
    </location>
</feature>
<feature type="transmembrane region" description="Helical" evidence="1">
    <location>
        <begin position="20"/>
        <end position="40"/>
    </location>
</feature>
<feature type="transmembrane region" description="Helical" evidence="1">
    <location>
        <begin position="92"/>
        <end position="112"/>
    </location>
</feature>
<feature type="transmembrane region" description="Helical" evidence="1">
    <location>
        <begin position="127"/>
        <end position="147"/>
    </location>
</feature>
<feature type="transmembrane region" description="Helical" evidence="1">
    <location>
        <begin position="165"/>
        <end position="185"/>
    </location>
</feature>
<feature type="transmembrane region" description="Helical" evidence="1">
    <location>
        <begin position="206"/>
        <end position="226"/>
    </location>
</feature>
<feature type="transmembrane region" description="Helical" evidence="1">
    <location>
        <begin position="268"/>
        <end position="288"/>
    </location>
</feature>
<feature type="transmembrane region" description="Helical" evidence="1">
    <location>
        <begin position="294"/>
        <end position="314"/>
    </location>
</feature>
<feature type="transmembrane region" description="Helical" evidence="1">
    <location>
        <begin position="329"/>
        <end position="349"/>
    </location>
</feature>
<evidence type="ECO:0000255" key="1">
    <source>
        <dbReference type="HAMAP-Rule" id="MF_01350"/>
    </source>
</evidence>
<proteinExistence type="inferred from homology"/>
<reference key="1">
    <citation type="journal article" date="2006" name="J. Bacteriol.">
        <title>Comparison of the genome sequence of the poultry pathogen Bordetella avium with those of B. bronchiseptica, B. pertussis, and B. parapertussis reveals extensive diversity in surface structures associated with host interaction.</title>
        <authorList>
            <person name="Sebaihia M."/>
            <person name="Preston A."/>
            <person name="Maskell D.J."/>
            <person name="Kuzmiak H."/>
            <person name="Connell T.D."/>
            <person name="King N.D."/>
            <person name="Orndorff P.E."/>
            <person name="Miyamoto D.M."/>
            <person name="Thomson N.R."/>
            <person name="Harris D."/>
            <person name="Goble A."/>
            <person name="Lord A."/>
            <person name="Murphy L."/>
            <person name="Quail M.A."/>
            <person name="Rutter S."/>
            <person name="Squares R."/>
            <person name="Squares S."/>
            <person name="Woodward J."/>
            <person name="Parkhill J."/>
            <person name="Temple L.M."/>
        </authorList>
    </citation>
    <scope>NUCLEOTIDE SEQUENCE [LARGE SCALE GENOMIC DNA]</scope>
    <source>
        <strain>197N</strain>
    </source>
</reference>
<sequence>MEWLNVLESQGQALLGPTAWLVVWTIIKIVIIAVPIILCVAYLTYWERKMIGWMHVRLGPNRVGFKGLLQPFADVFKLLTKEVVVPSQANKILFIVAPVVTLMPALAAWAVVPFGPEAVLANVNAGLLYVMAITSIGVYGVIVAGWASNSKYAFLGALRASAQMVSYELAISFVLVTVLLVSGSLNMNEIVLGQGRGWFAERGLTFLSWNWLPLLPLFVIYVISAVAETNRHPFDVVEGESEIVAGHMVEYSGMAFALFFLGEYANMILLSAMASIMFLGGWMSPIDIAPLNWIPGWIWLGIKTFFVVSLFIWFRASFPRYRYDQIMRLGWKIFIPLTGVWLVVVAIWMQTPWNIWR</sequence>
<comment type="function">
    <text evidence="1">NDH-1 shuttles electrons from NADH, via FMN and iron-sulfur (Fe-S) centers, to quinones in the respiratory chain. The immediate electron acceptor for the enzyme in this species is believed to be ubiquinone. Couples the redox reaction to proton translocation (for every two electrons transferred, four hydrogen ions are translocated across the cytoplasmic membrane), and thus conserves the redox energy in a proton gradient. This subunit may bind ubiquinone.</text>
</comment>
<comment type="catalytic activity">
    <reaction evidence="1">
        <text>a quinone + NADH + 5 H(+)(in) = a quinol + NAD(+) + 4 H(+)(out)</text>
        <dbReference type="Rhea" id="RHEA:57888"/>
        <dbReference type="ChEBI" id="CHEBI:15378"/>
        <dbReference type="ChEBI" id="CHEBI:24646"/>
        <dbReference type="ChEBI" id="CHEBI:57540"/>
        <dbReference type="ChEBI" id="CHEBI:57945"/>
        <dbReference type="ChEBI" id="CHEBI:132124"/>
    </reaction>
</comment>
<comment type="subunit">
    <text evidence="1">NDH-1 is composed of 14 different subunits. Subunits NuoA, H, J, K, L, M, N constitute the membrane sector of the complex.</text>
</comment>
<comment type="subcellular location">
    <subcellularLocation>
        <location evidence="1">Cell inner membrane</location>
        <topology evidence="1">Multi-pass membrane protein</topology>
    </subcellularLocation>
</comment>
<comment type="similarity">
    <text evidence="1">Belongs to the complex I subunit 1 family.</text>
</comment>